<reference key="1">
    <citation type="submission" date="2007-02" db="EMBL/GenBank/DDBJ databases">
        <title>Complete sequence of chromosome 2 of Rhodobacter sphaeroides ATCC 17029.</title>
        <authorList>
            <person name="Copeland A."/>
            <person name="Lucas S."/>
            <person name="Lapidus A."/>
            <person name="Barry K."/>
            <person name="Detter J.C."/>
            <person name="Glavina del Rio T."/>
            <person name="Hammon N."/>
            <person name="Israni S."/>
            <person name="Dalin E."/>
            <person name="Tice H."/>
            <person name="Pitluck S."/>
            <person name="Kiss H."/>
            <person name="Brettin T."/>
            <person name="Bruce D."/>
            <person name="Han C."/>
            <person name="Tapia R."/>
            <person name="Gilna P."/>
            <person name="Schmutz J."/>
            <person name="Larimer F."/>
            <person name="Land M."/>
            <person name="Hauser L."/>
            <person name="Kyrpides N."/>
            <person name="Mikhailova N."/>
            <person name="Richardson P."/>
            <person name="Mackenzie C."/>
            <person name="Choudhary M."/>
            <person name="Donohue T.J."/>
            <person name="Kaplan S."/>
        </authorList>
    </citation>
    <scope>NUCLEOTIDE SEQUENCE [LARGE SCALE GENOMIC DNA]</scope>
    <source>
        <strain>ATCC 17029 / ATH 2.4.9</strain>
    </source>
</reference>
<evidence type="ECO:0000255" key="1">
    <source>
        <dbReference type="HAMAP-Rule" id="MF_00135"/>
    </source>
</evidence>
<accession>A3PPV2</accession>
<feature type="chain" id="PRO_1000018637" description="N-(5'-phosphoribosyl)anthranilate isomerase">
    <location>
        <begin position="1"/>
        <end position="212"/>
    </location>
</feature>
<organism>
    <name type="scientific">Cereibacter sphaeroides (strain ATCC 17029 / ATH 2.4.9)</name>
    <name type="common">Rhodobacter sphaeroides</name>
    <dbReference type="NCBI Taxonomy" id="349101"/>
    <lineage>
        <taxon>Bacteria</taxon>
        <taxon>Pseudomonadati</taxon>
        <taxon>Pseudomonadota</taxon>
        <taxon>Alphaproteobacteria</taxon>
        <taxon>Rhodobacterales</taxon>
        <taxon>Paracoccaceae</taxon>
        <taxon>Cereibacter</taxon>
    </lineage>
</organism>
<keyword id="KW-0028">Amino-acid biosynthesis</keyword>
<keyword id="KW-0057">Aromatic amino acid biosynthesis</keyword>
<keyword id="KW-0413">Isomerase</keyword>
<keyword id="KW-0822">Tryptophan biosynthesis</keyword>
<comment type="catalytic activity">
    <reaction evidence="1">
        <text>N-(5-phospho-beta-D-ribosyl)anthranilate = 1-(2-carboxyphenylamino)-1-deoxy-D-ribulose 5-phosphate</text>
        <dbReference type="Rhea" id="RHEA:21540"/>
        <dbReference type="ChEBI" id="CHEBI:18277"/>
        <dbReference type="ChEBI" id="CHEBI:58613"/>
        <dbReference type="EC" id="5.3.1.24"/>
    </reaction>
</comment>
<comment type="pathway">
    <text evidence="1">Amino-acid biosynthesis; L-tryptophan biosynthesis; L-tryptophan from chorismate: step 3/5.</text>
</comment>
<comment type="similarity">
    <text evidence="1">Belongs to the TrpF family.</text>
</comment>
<proteinExistence type="inferred from homology"/>
<sequence length="212" mass="22144">MAGVRVKICGLRTESDVKAAASSGAAYVGLVFFPKSPRHLELAQAQRLALAAPPGVAKVALTVDASDETLDAIVEAVPLDMLQLHGGESPERVAEVRARYGLPVMKAVGVADEGDLPQILEQSLAADQILIDAKPPKGAALPGGNGLSFDWRLISGRHWIRPWMLAGGLTAENLAEAVRRTGASQVDVSSGVESAPGVKDPARIAAFLQTAR</sequence>
<dbReference type="EC" id="5.3.1.24" evidence="1"/>
<dbReference type="EMBL" id="CP000578">
    <property type="protein sequence ID" value="ABN78368.1"/>
    <property type="molecule type" value="Genomic_DNA"/>
</dbReference>
<dbReference type="RefSeq" id="WP_011842227.1">
    <property type="nucleotide sequence ID" value="NC_009050.1"/>
</dbReference>
<dbReference type="SMR" id="A3PPV2"/>
<dbReference type="KEGG" id="rsh:Rsph17029_3272"/>
<dbReference type="HOGENOM" id="CLU_076364_1_1_5"/>
<dbReference type="UniPathway" id="UPA00035">
    <property type="reaction ID" value="UER00042"/>
</dbReference>
<dbReference type="GO" id="GO:0004640">
    <property type="term" value="F:phosphoribosylanthranilate isomerase activity"/>
    <property type="evidence" value="ECO:0007669"/>
    <property type="project" value="UniProtKB-UniRule"/>
</dbReference>
<dbReference type="GO" id="GO:0000162">
    <property type="term" value="P:L-tryptophan biosynthetic process"/>
    <property type="evidence" value="ECO:0007669"/>
    <property type="project" value="UniProtKB-UniRule"/>
</dbReference>
<dbReference type="CDD" id="cd00405">
    <property type="entry name" value="PRAI"/>
    <property type="match status" value="1"/>
</dbReference>
<dbReference type="Gene3D" id="3.20.20.70">
    <property type="entry name" value="Aldolase class I"/>
    <property type="match status" value="1"/>
</dbReference>
<dbReference type="HAMAP" id="MF_00135">
    <property type="entry name" value="PRAI"/>
    <property type="match status" value="1"/>
</dbReference>
<dbReference type="InterPro" id="IPR013785">
    <property type="entry name" value="Aldolase_TIM"/>
</dbReference>
<dbReference type="InterPro" id="IPR001240">
    <property type="entry name" value="PRAI_dom"/>
</dbReference>
<dbReference type="InterPro" id="IPR011060">
    <property type="entry name" value="RibuloseP-bd_barrel"/>
</dbReference>
<dbReference type="InterPro" id="IPR044643">
    <property type="entry name" value="TrpF_fam"/>
</dbReference>
<dbReference type="NCBIfam" id="NF002295">
    <property type="entry name" value="PRK01222.1-1"/>
    <property type="match status" value="1"/>
</dbReference>
<dbReference type="PANTHER" id="PTHR42894">
    <property type="entry name" value="N-(5'-PHOSPHORIBOSYL)ANTHRANILATE ISOMERASE"/>
    <property type="match status" value="1"/>
</dbReference>
<dbReference type="PANTHER" id="PTHR42894:SF1">
    <property type="entry name" value="N-(5'-PHOSPHORIBOSYL)ANTHRANILATE ISOMERASE"/>
    <property type="match status" value="1"/>
</dbReference>
<dbReference type="Pfam" id="PF00697">
    <property type="entry name" value="PRAI"/>
    <property type="match status" value="1"/>
</dbReference>
<dbReference type="SUPFAM" id="SSF51366">
    <property type="entry name" value="Ribulose-phoshate binding barrel"/>
    <property type="match status" value="1"/>
</dbReference>
<name>TRPF_CERS1</name>
<protein>
    <recommendedName>
        <fullName evidence="1">N-(5'-phosphoribosyl)anthranilate isomerase</fullName>
        <shortName evidence="1">PRAI</shortName>
        <ecNumber evidence="1">5.3.1.24</ecNumber>
    </recommendedName>
</protein>
<gene>
    <name evidence="1" type="primary">trpF</name>
    <name type="ordered locus">Rsph17029_3272</name>
</gene>